<name>SYH_STAA3</name>
<gene>
    <name evidence="1" type="primary">hisS</name>
    <name type="ordered locus">SAUSA300_1587</name>
</gene>
<sequence>MIKIPRGTQDILPEDSKKWRYIENQLDELMTFYNYKEIRTPIFESTDLFARGVGDSTDVVQKEMYTFKDKGDRSITLRPEGTAAVVRSYIEHKMQGNPNQPIKLYYNGPMFRYERKQKGRYRQFNQFGVEAIGAENPSVDAEVLAMVMHIYQSFGLKHLKLVINSVGDMASRKEYNEALVKHFEPVIHEFCSDCQSRLHTNPMRILDCKVDRDKEAIKTAPRITDFLNEESKAYYEQVKAYLDDLGIPYIEDPNLVRGLDYYTHTAFELMMDNPNYDGAITTLCGGGRYNGLLELLDGPSETGIGFALSIERLLLALEEEGIELDIEENLDLFIVTMGDQADRYAVKLLNHLRHNGIKADKDYLQRKIKGQMKQADRLGAKFTIVIGDQELENNKIDVKNMTTGESETIELDALVEYFKK</sequence>
<dbReference type="EC" id="6.1.1.21" evidence="1"/>
<dbReference type="EMBL" id="CP000255">
    <property type="protein sequence ID" value="ABD20629.1"/>
    <property type="molecule type" value="Genomic_DNA"/>
</dbReference>
<dbReference type="RefSeq" id="WP_000590826.1">
    <property type="nucleotide sequence ID" value="NZ_CP027476.1"/>
</dbReference>
<dbReference type="SMR" id="Q2FG96"/>
<dbReference type="KEGG" id="saa:SAUSA300_1587"/>
<dbReference type="HOGENOM" id="CLU_025113_1_1_9"/>
<dbReference type="OMA" id="CGGGNFK"/>
<dbReference type="Proteomes" id="UP000001939">
    <property type="component" value="Chromosome"/>
</dbReference>
<dbReference type="GO" id="GO:0005737">
    <property type="term" value="C:cytoplasm"/>
    <property type="evidence" value="ECO:0007669"/>
    <property type="project" value="UniProtKB-SubCell"/>
</dbReference>
<dbReference type="GO" id="GO:0005524">
    <property type="term" value="F:ATP binding"/>
    <property type="evidence" value="ECO:0007669"/>
    <property type="project" value="UniProtKB-UniRule"/>
</dbReference>
<dbReference type="GO" id="GO:0140096">
    <property type="term" value="F:catalytic activity, acting on a protein"/>
    <property type="evidence" value="ECO:0007669"/>
    <property type="project" value="UniProtKB-ARBA"/>
</dbReference>
<dbReference type="GO" id="GO:0004821">
    <property type="term" value="F:histidine-tRNA ligase activity"/>
    <property type="evidence" value="ECO:0007669"/>
    <property type="project" value="UniProtKB-UniRule"/>
</dbReference>
<dbReference type="GO" id="GO:0016740">
    <property type="term" value="F:transferase activity"/>
    <property type="evidence" value="ECO:0007669"/>
    <property type="project" value="UniProtKB-ARBA"/>
</dbReference>
<dbReference type="GO" id="GO:0006427">
    <property type="term" value="P:histidyl-tRNA aminoacylation"/>
    <property type="evidence" value="ECO:0007669"/>
    <property type="project" value="UniProtKB-UniRule"/>
</dbReference>
<dbReference type="CDD" id="cd00738">
    <property type="entry name" value="HGTP_anticodon"/>
    <property type="match status" value="1"/>
</dbReference>
<dbReference type="CDD" id="cd00773">
    <property type="entry name" value="HisRS-like_core"/>
    <property type="match status" value="1"/>
</dbReference>
<dbReference type="FunFam" id="3.30.930.10:FF:000005">
    <property type="entry name" value="Histidine--tRNA ligase"/>
    <property type="match status" value="1"/>
</dbReference>
<dbReference type="Gene3D" id="3.40.50.800">
    <property type="entry name" value="Anticodon-binding domain"/>
    <property type="match status" value="1"/>
</dbReference>
<dbReference type="Gene3D" id="3.30.930.10">
    <property type="entry name" value="Bira Bifunctional Protein, Domain 2"/>
    <property type="match status" value="1"/>
</dbReference>
<dbReference type="HAMAP" id="MF_00127">
    <property type="entry name" value="His_tRNA_synth"/>
    <property type="match status" value="1"/>
</dbReference>
<dbReference type="InterPro" id="IPR006195">
    <property type="entry name" value="aa-tRNA-synth_II"/>
</dbReference>
<dbReference type="InterPro" id="IPR045864">
    <property type="entry name" value="aa-tRNA-synth_II/BPL/LPL"/>
</dbReference>
<dbReference type="InterPro" id="IPR004154">
    <property type="entry name" value="Anticodon-bd"/>
</dbReference>
<dbReference type="InterPro" id="IPR036621">
    <property type="entry name" value="Anticodon-bd_dom_sf"/>
</dbReference>
<dbReference type="InterPro" id="IPR015807">
    <property type="entry name" value="His-tRNA-ligase"/>
</dbReference>
<dbReference type="InterPro" id="IPR041715">
    <property type="entry name" value="HisRS-like_core"/>
</dbReference>
<dbReference type="InterPro" id="IPR004516">
    <property type="entry name" value="HisRS/HisZ"/>
</dbReference>
<dbReference type="NCBIfam" id="TIGR00442">
    <property type="entry name" value="hisS"/>
    <property type="match status" value="1"/>
</dbReference>
<dbReference type="PANTHER" id="PTHR43707:SF1">
    <property type="entry name" value="HISTIDINE--TRNA LIGASE, MITOCHONDRIAL-RELATED"/>
    <property type="match status" value="1"/>
</dbReference>
<dbReference type="PANTHER" id="PTHR43707">
    <property type="entry name" value="HISTIDYL-TRNA SYNTHETASE"/>
    <property type="match status" value="1"/>
</dbReference>
<dbReference type="Pfam" id="PF03129">
    <property type="entry name" value="HGTP_anticodon"/>
    <property type="match status" value="1"/>
</dbReference>
<dbReference type="Pfam" id="PF13393">
    <property type="entry name" value="tRNA-synt_His"/>
    <property type="match status" value="1"/>
</dbReference>
<dbReference type="PIRSF" id="PIRSF001549">
    <property type="entry name" value="His-tRNA_synth"/>
    <property type="match status" value="1"/>
</dbReference>
<dbReference type="SUPFAM" id="SSF52954">
    <property type="entry name" value="Class II aaRS ABD-related"/>
    <property type="match status" value="1"/>
</dbReference>
<dbReference type="SUPFAM" id="SSF55681">
    <property type="entry name" value="Class II aaRS and biotin synthetases"/>
    <property type="match status" value="1"/>
</dbReference>
<dbReference type="PROSITE" id="PS50862">
    <property type="entry name" value="AA_TRNA_LIGASE_II"/>
    <property type="match status" value="1"/>
</dbReference>
<organism>
    <name type="scientific">Staphylococcus aureus (strain USA300)</name>
    <dbReference type="NCBI Taxonomy" id="367830"/>
    <lineage>
        <taxon>Bacteria</taxon>
        <taxon>Bacillati</taxon>
        <taxon>Bacillota</taxon>
        <taxon>Bacilli</taxon>
        <taxon>Bacillales</taxon>
        <taxon>Staphylococcaceae</taxon>
        <taxon>Staphylococcus</taxon>
    </lineage>
</organism>
<proteinExistence type="inferred from homology"/>
<evidence type="ECO:0000255" key="1">
    <source>
        <dbReference type="HAMAP-Rule" id="MF_00127"/>
    </source>
</evidence>
<comment type="catalytic activity">
    <reaction evidence="1">
        <text>tRNA(His) + L-histidine + ATP = L-histidyl-tRNA(His) + AMP + diphosphate + H(+)</text>
        <dbReference type="Rhea" id="RHEA:17313"/>
        <dbReference type="Rhea" id="RHEA-COMP:9665"/>
        <dbReference type="Rhea" id="RHEA-COMP:9689"/>
        <dbReference type="ChEBI" id="CHEBI:15378"/>
        <dbReference type="ChEBI" id="CHEBI:30616"/>
        <dbReference type="ChEBI" id="CHEBI:33019"/>
        <dbReference type="ChEBI" id="CHEBI:57595"/>
        <dbReference type="ChEBI" id="CHEBI:78442"/>
        <dbReference type="ChEBI" id="CHEBI:78527"/>
        <dbReference type="ChEBI" id="CHEBI:456215"/>
        <dbReference type="EC" id="6.1.1.21"/>
    </reaction>
</comment>
<comment type="subunit">
    <text evidence="1">Homodimer.</text>
</comment>
<comment type="subcellular location">
    <subcellularLocation>
        <location evidence="1">Cytoplasm</location>
    </subcellularLocation>
</comment>
<comment type="similarity">
    <text evidence="1">Belongs to the class-II aminoacyl-tRNA synthetase family.</text>
</comment>
<accession>Q2FG96</accession>
<feature type="chain" id="PRO_1000016459" description="Histidine--tRNA ligase">
    <location>
        <begin position="1"/>
        <end position="420"/>
    </location>
</feature>
<keyword id="KW-0030">Aminoacyl-tRNA synthetase</keyword>
<keyword id="KW-0067">ATP-binding</keyword>
<keyword id="KW-0963">Cytoplasm</keyword>
<keyword id="KW-0436">Ligase</keyword>
<keyword id="KW-0547">Nucleotide-binding</keyword>
<keyword id="KW-0648">Protein biosynthesis</keyword>
<reference key="1">
    <citation type="journal article" date="2006" name="Lancet">
        <title>Complete genome sequence of USA300, an epidemic clone of community-acquired meticillin-resistant Staphylococcus aureus.</title>
        <authorList>
            <person name="Diep B.A."/>
            <person name="Gill S.R."/>
            <person name="Chang R.F."/>
            <person name="Phan T.H."/>
            <person name="Chen J.H."/>
            <person name="Davidson M.G."/>
            <person name="Lin F."/>
            <person name="Lin J."/>
            <person name="Carleton H.A."/>
            <person name="Mongodin E.F."/>
            <person name="Sensabaugh G.F."/>
            <person name="Perdreau-Remington F."/>
        </authorList>
    </citation>
    <scope>NUCLEOTIDE SEQUENCE [LARGE SCALE GENOMIC DNA]</scope>
    <source>
        <strain>USA300</strain>
    </source>
</reference>
<protein>
    <recommendedName>
        <fullName evidence="1">Histidine--tRNA ligase</fullName>
        <ecNumber evidence="1">6.1.1.21</ecNumber>
    </recommendedName>
    <alternativeName>
        <fullName evidence="1">Histidyl-tRNA synthetase</fullName>
        <shortName evidence="1">HisRS</shortName>
    </alternativeName>
</protein>